<reference key="1">
    <citation type="journal article" date="2007" name="Nat. Biotechnol.">
        <title>Genome sequencing and analysis of the versatile cell factory Aspergillus niger CBS 513.88.</title>
        <authorList>
            <person name="Pel H.J."/>
            <person name="de Winde J.H."/>
            <person name="Archer D.B."/>
            <person name="Dyer P.S."/>
            <person name="Hofmann G."/>
            <person name="Schaap P.J."/>
            <person name="Turner G."/>
            <person name="de Vries R.P."/>
            <person name="Albang R."/>
            <person name="Albermann K."/>
            <person name="Andersen M.R."/>
            <person name="Bendtsen J.D."/>
            <person name="Benen J.A.E."/>
            <person name="van den Berg M."/>
            <person name="Breestraat S."/>
            <person name="Caddick M.X."/>
            <person name="Contreras R."/>
            <person name="Cornell M."/>
            <person name="Coutinho P.M."/>
            <person name="Danchin E.G.J."/>
            <person name="Debets A.J.M."/>
            <person name="Dekker P."/>
            <person name="van Dijck P.W.M."/>
            <person name="van Dijk A."/>
            <person name="Dijkhuizen L."/>
            <person name="Driessen A.J.M."/>
            <person name="d'Enfert C."/>
            <person name="Geysens S."/>
            <person name="Goosen C."/>
            <person name="Groot G.S.P."/>
            <person name="de Groot P.W.J."/>
            <person name="Guillemette T."/>
            <person name="Henrissat B."/>
            <person name="Herweijer M."/>
            <person name="van den Hombergh J.P.T.W."/>
            <person name="van den Hondel C.A.M.J.J."/>
            <person name="van der Heijden R.T.J.M."/>
            <person name="van der Kaaij R.M."/>
            <person name="Klis F.M."/>
            <person name="Kools H.J."/>
            <person name="Kubicek C.P."/>
            <person name="van Kuyk P.A."/>
            <person name="Lauber J."/>
            <person name="Lu X."/>
            <person name="van der Maarel M.J.E.C."/>
            <person name="Meulenberg R."/>
            <person name="Menke H."/>
            <person name="Mortimer M.A."/>
            <person name="Nielsen J."/>
            <person name="Oliver S.G."/>
            <person name="Olsthoorn M."/>
            <person name="Pal K."/>
            <person name="van Peij N.N.M.E."/>
            <person name="Ram A.F.J."/>
            <person name="Rinas U."/>
            <person name="Roubos J.A."/>
            <person name="Sagt C.M.J."/>
            <person name="Schmoll M."/>
            <person name="Sun J."/>
            <person name="Ussery D."/>
            <person name="Varga J."/>
            <person name="Vervecken W."/>
            <person name="van de Vondervoort P.J.J."/>
            <person name="Wedler H."/>
            <person name="Woesten H.A.B."/>
            <person name="Zeng A.-P."/>
            <person name="van Ooyen A.J.J."/>
            <person name="Visser J."/>
            <person name="Stam H."/>
        </authorList>
    </citation>
    <scope>NUCLEOTIDE SEQUENCE [LARGE SCALE GENOMIC DNA]</scope>
    <source>
        <strain>ATCC MYA-4892 / CBS 513.88 / FGSC A1513</strain>
    </source>
</reference>
<feature type="signal peptide" evidence="2">
    <location>
        <begin position="1"/>
        <end position="19"/>
    </location>
</feature>
<feature type="chain" id="PRO_5000219659" description="Probable exopolygalacturonase C">
    <location>
        <begin position="20"/>
        <end position="440"/>
    </location>
</feature>
<feature type="repeat" description="PbH1 1">
    <location>
        <begin position="215"/>
        <end position="236"/>
    </location>
</feature>
<feature type="repeat" description="PbH1 2">
    <location>
        <begin position="238"/>
        <end position="259"/>
    </location>
</feature>
<feature type="repeat" description="PbH1 3">
    <location>
        <begin position="265"/>
        <end position="288"/>
    </location>
</feature>
<feature type="active site" description="Proton donor" evidence="1">
    <location>
        <position position="229"/>
    </location>
</feature>
<feature type="active site" evidence="1">
    <location>
        <position position="253"/>
    </location>
</feature>
<feature type="glycosylation site" description="N-linked (GlcNAc...) asparagine" evidence="2">
    <location>
        <position position="82"/>
    </location>
</feature>
<feature type="glycosylation site" description="N-linked (GlcNAc...) asparagine" evidence="2">
    <location>
        <position position="99"/>
    </location>
</feature>
<feature type="glycosylation site" description="N-linked (GlcNAc...) asparagine" evidence="2">
    <location>
        <position position="269"/>
    </location>
</feature>
<feature type="glycosylation site" description="N-linked (GlcNAc...) asparagine" evidence="2">
    <location>
        <position position="301"/>
    </location>
</feature>
<feature type="glycosylation site" description="N-linked (GlcNAc...) asparagine" evidence="2">
    <location>
        <position position="311"/>
    </location>
</feature>
<feature type="glycosylation site" description="N-linked (GlcNAc...) asparagine" evidence="2">
    <location>
        <position position="334"/>
    </location>
</feature>
<feature type="glycosylation site" description="N-linked (GlcNAc...) asparagine" evidence="2">
    <location>
        <position position="417"/>
    </location>
</feature>
<feature type="glycosylation site" description="N-linked (GlcNAc...) asparagine" evidence="2">
    <location>
        <position position="432"/>
    </location>
</feature>
<feature type="disulfide bond" evidence="1">
    <location>
        <begin position="387"/>
        <end position="393"/>
    </location>
</feature>
<proteinExistence type="inferred from homology"/>
<dbReference type="EC" id="3.2.1.67"/>
<dbReference type="EMBL" id="AM270034">
    <property type="protein sequence ID" value="CAK44512.1"/>
    <property type="status" value="ALT_FRAME"/>
    <property type="molecule type" value="Genomic_DNA"/>
</dbReference>
<dbReference type="SMR" id="A2QEW2"/>
<dbReference type="CAZy" id="GH28">
    <property type="family name" value="Glycoside Hydrolase Family 28"/>
</dbReference>
<dbReference type="GlyCosmos" id="A2QEW2">
    <property type="glycosylation" value="8 sites, No reported glycans"/>
</dbReference>
<dbReference type="EnsemblFungi" id="CAK44512">
    <property type="protein sequence ID" value="CAK44512"/>
    <property type="gene ID" value="An02g12450"/>
</dbReference>
<dbReference type="Proteomes" id="UP000006706">
    <property type="component" value="Chromosome 4R"/>
</dbReference>
<dbReference type="GO" id="GO:0005576">
    <property type="term" value="C:extracellular region"/>
    <property type="evidence" value="ECO:0000250"/>
    <property type="project" value="UniProtKB"/>
</dbReference>
<dbReference type="GO" id="GO:0047911">
    <property type="term" value="F:galacturan 1,4-alpha-galacturonidase activity"/>
    <property type="evidence" value="ECO:0007669"/>
    <property type="project" value="UniProtKB-EC"/>
</dbReference>
<dbReference type="GO" id="GO:0004650">
    <property type="term" value="F:polygalacturonase activity"/>
    <property type="evidence" value="ECO:0000250"/>
    <property type="project" value="UniProtKB"/>
</dbReference>
<dbReference type="GO" id="GO:0071555">
    <property type="term" value="P:cell wall organization"/>
    <property type="evidence" value="ECO:0007669"/>
    <property type="project" value="UniProtKB-KW"/>
</dbReference>
<dbReference type="GO" id="GO:0045490">
    <property type="term" value="P:pectin catabolic process"/>
    <property type="evidence" value="ECO:0000250"/>
    <property type="project" value="UniProtKB"/>
</dbReference>
<dbReference type="FunFam" id="2.160.20.10:FF:000037">
    <property type="entry name" value="Probable exopolygalacturonase C"/>
    <property type="match status" value="1"/>
</dbReference>
<dbReference type="Gene3D" id="2.160.20.10">
    <property type="entry name" value="Single-stranded right-handed beta-helix, Pectin lyase-like"/>
    <property type="match status" value="1"/>
</dbReference>
<dbReference type="InterPro" id="IPR000743">
    <property type="entry name" value="Glyco_hydro_28"/>
</dbReference>
<dbReference type="InterPro" id="IPR012334">
    <property type="entry name" value="Pectin_lyas_fold"/>
</dbReference>
<dbReference type="InterPro" id="IPR011050">
    <property type="entry name" value="Pectin_lyase_fold/virulence"/>
</dbReference>
<dbReference type="PANTHER" id="PTHR31736">
    <property type="match status" value="1"/>
</dbReference>
<dbReference type="PANTHER" id="PTHR31736:SF11">
    <property type="entry name" value="EXOPOLYGALACTURONASE C-RELATED"/>
    <property type="match status" value="1"/>
</dbReference>
<dbReference type="Pfam" id="PF00295">
    <property type="entry name" value="Glyco_hydro_28"/>
    <property type="match status" value="1"/>
</dbReference>
<dbReference type="SUPFAM" id="SSF51126">
    <property type="entry name" value="Pectin lyase-like"/>
    <property type="match status" value="1"/>
</dbReference>
<keyword id="KW-0961">Cell wall biogenesis/degradation</keyword>
<keyword id="KW-1015">Disulfide bond</keyword>
<keyword id="KW-0325">Glycoprotein</keyword>
<keyword id="KW-0326">Glycosidase</keyword>
<keyword id="KW-0378">Hydrolase</keyword>
<keyword id="KW-1185">Reference proteome</keyword>
<keyword id="KW-0677">Repeat</keyword>
<keyword id="KW-0964">Secreted</keyword>
<keyword id="KW-0732">Signal</keyword>
<sequence>MSVFKASFLFLLSSSLVHGVPHSSRASRSQQCVVPSKYQASNGMADDSVAVSQAFAQCATDSVIIFEEGVNYNIFQPITATNLSNVEIRMHGNLHLPQNITAVQNIVSDGTSTWFTLEGPKVDWIGPEDVNNGWIDSYGQPWWDANPAGSSGIDNRPHLMSFKSSQATMKYFRSRKPIAWNVKLHGQDITVSHAIIDATSTGSFPFNTDGFDVEGTNIQITDSIMYNGDDAIAVGADSHDTLFTRNTIGYQTHGMSIGSLGKDPTDFANISNIRFDDVTVVDGLYAARFKSWSGGTGLVKNVTWNNIRVFNVTFPIFVTQSYSDQGASRSGTVNASSAVMMEDFTWSDFAGSINTYQPGDGSCVSDPCWYNVGLPNLKHTEALIIECHTAQSCKNFVTDNIQLYPQVLEPASVICMNATAALNPDLGFTCKNGTYSPLSN</sequence>
<evidence type="ECO:0000250" key="1"/>
<evidence type="ECO:0000255" key="2"/>
<evidence type="ECO:0000305" key="3"/>
<name>PGXC_ASPNC</name>
<comment type="function">
    <text evidence="1">Specific in hydrolyzing the terminal glycosidic bond of polygalacturonic acid and oligogalacturonates.</text>
</comment>
<comment type="catalytic activity">
    <reaction>
        <text>[(1-&gt;4)-alpha-D-galacturonosyl](n) + H2O = alpha-D-galacturonate + [(1-&gt;4)-alpha-D-galacturonosyl](n-1)</text>
        <dbReference type="Rhea" id="RHEA:14117"/>
        <dbReference type="Rhea" id="RHEA-COMP:14570"/>
        <dbReference type="Rhea" id="RHEA-COMP:14572"/>
        <dbReference type="ChEBI" id="CHEBI:15377"/>
        <dbReference type="ChEBI" id="CHEBI:58658"/>
        <dbReference type="ChEBI" id="CHEBI:140523"/>
        <dbReference type="EC" id="3.2.1.67"/>
    </reaction>
</comment>
<comment type="subcellular location">
    <subcellularLocation>
        <location evidence="1">Secreted</location>
    </subcellularLocation>
</comment>
<comment type="similarity">
    <text evidence="3">Belongs to the glycosyl hydrolase 28 family.</text>
</comment>
<comment type="sequence caution" evidence="3">
    <conflict type="frameshift">
        <sequence resource="EMBL-CDS" id="CAK44512"/>
    </conflict>
</comment>
<organism>
    <name type="scientific">Aspergillus niger (strain ATCC MYA-4892 / CBS 513.88 / FGSC A1513)</name>
    <dbReference type="NCBI Taxonomy" id="425011"/>
    <lineage>
        <taxon>Eukaryota</taxon>
        <taxon>Fungi</taxon>
        <taxon>Dikarya</taxon>
        <taxon>Ascomycota</taxon>
        <taxon>Pezizomycotina</taxon>
        <taxon>Eurotiomycetes</taxon>
        <taxon>Eurotiomycetidae</taxon>
        <taxon>Eurotiales</taxon>
        <taxon>Aspergillaceae</taxon>
        <taxon>Aspergillus</taxon>
        <taxon>Aspergillus subgen. Circumdati</taxon>
    </lineage>
</organism>
<protein>
    <recommendedName>
        <fullName>Probable exopolygalacturonase C</fullName>
        <ecNumber>3.2.1.67</ecNumber>
    </recommendedName>
    <alternativeName>
        <fullName>Galacturan 1,4-alpha-galacturonidase C</fullName>
    </alternativeName>
    <alternativeName>
        <fullName>Poly(1,4-alpha-D-galacturonide)galacturonohydrolase C</fullName>
    </alternativeName>
</protein>
<gene>
    <name type="primary">pgxC</name>
    <name type="ORF">An02g12450</name>
</gene>
<accession>A2QEW2</accession>